<gene>
    <name evidence="1" type="primary">rpsD</name>
    <name type="ordered locus">MADE_1013940</name>
</gene>
<keyword id="KW-0687">Ribonucleoprotein</keyword>
<keyword id="KW-0689">Ribosomal protein</keyword>
<keyword id="KW-0694">RNA-binding</keyword>
<keyword id="KW-0699">rRNA-binding</keyword>
<name>RS4_ALTMD</name>
<accession>B4RT52</accession>
<accession>F2GAI8</accession>
<sequence>MARYLGPKLKLSRREGTDLFLKSGVRAIDSKCKIDTAPGQHGARRGRLSDYGVQLREKQKVRRMYGVLEKQFRNYYKEAARLKGNTGENLLQLLEQRLDNVVYRMGFASTRAEARQLVSHKAIMVNGQVVNIPSFNVSAEDVVSVREKAKKQARIVAALELADQREKPTWIEVDSSKMEGTFKRVPERTDLSAEINEQLIVELYSK</sequence>
<comment type="function">
    <text evidence="1">One of the primary rRNA binding proteins, it binds directly to 16S rRNA where it nucleates assembly of the body of the 30S subunit.</text>
</comment>
<comment type="function">
    <text evidence="1">With S5 and S12 plays an important role in translational accuracy.</text>
</comment>
<comment type="subunit">
    <text evidence="1">Part of the 30S ribosomal subunit. Contacts protein S5. The interaction surface between S4 and S5 is involved in control of translational fidelity.</text>
</comment>
<comment type="similarity">
    <text evidence="1">Belongs to the universal ribosomal protein uS4 family.</text>
</comment>
<reference key="1">
    <citation type="journal article" date="2008" name="ISME J.">
        <title>Comparative genomics of two ecotypes of the marine planktonic copiotroph Alteromonas macleodii suggests alternative lifestyles associated with different kinds of particulate organic matter.</title>
        <authorList>
            <person name="Ivars-Martinez E."/>
            <person name="Martin-Cuadrado A.-B."/>
            <person name="D'Auria G."/>
            <person name="Mira A."/>
            <person name="Ferriera S."/>
            <person name="Johnson J."/>
            <person name="Friedman R."/>
            <person name="Rodriguez-Valera F."/>
        </authorList>
    </citation>
    <scope>NUCLEOTIDE SEQUENCE [LARGE SCALE GENOMIC DNA]</scope>
    <source>
        <strain>DSM 17117 / CIP 110805 / LMG 28347 / Deep ecotype</strain>
    </source>
</reference>
<protein>
    <recommendedName>
        <fullName evidence="1">Small ribosomal subunit protein uS4</fullName>
    </recommendedName>
    <alternativeName>
        <fullName evidence="2">30S ribosomal protein S4</fullName>
    </alternativeName>
</protein>
<evidence type="ECO:0000255" key="1">
    <source>
        <dbReference type="HAMAP-Rule" id="MF_01306"/>
    </source>
</evidence>
<evidence type="ECO:0000305" key="2"/>
<dbReference type="EMBL" id="CP001103">
    <property type="protein sequence ID" value="AEA98922.1"/>
    <property type="molecule type" value="Genomic_DNA"/>
</dbReference>
<dbReference type="RefSeq" id="WP_012519214.1">
    <property type="nucleotide sequence ID" value="NC_011138.3"/>
</dbReference>
<dbReference type="SMR" id="B4RT52"/>
<dbReference type="GeneID" id="78256519"/>
<dbReference type="KEGG" id="amc:MADE_1013940"/>
<dbReference type="HOGENOM" id="CLU_092403_0_2_6"/>
<dbReference type="Proteomes" id="UP000001870">
    <property type="component" value="Chromosome"/>
</dbReference>
<dbReference type="GO" id="GO:0015935">
    <property type="term" value="C:small ribosomal subunit"/>
    <property type="evidence" value="ECO:0007669"/>
    <property type="project" value="InterPro"/>
</dbReference>
<dbReference type="GO" id="GO:0019843">
    <property type="term" value="F:rRNA binding"/>
    <property type="evidence" value="ECO:0007669"/>
    <property type="project" value="UniProtKB-UniRule"/>
</dbReference>
<dbReference type="GO" id="GO:0003735">
    <property type="term" value="F:structural constituent of ribosome"/>
    <property type="evidence" value="ECO:0007669"/>
    <property type="project" value="InterPro"/>
</dbReference>
<dbReference type="GO" id="GO:0042274">
    <property type="term" value="P:ribosomal small subunit biogenesis"/>
    <property type="evidence" value="ECO:0007669"/>
    <property type="project" value="TreeGrafter"/>
</dbReference>
<dbReference type="GO" id="GO:0006412">
    <property type="term" value="P:translation"/>
    <property type="evidence" value="ECO:0007669"/>
    <property type="project" value="UniProtKB-UniRule"/>
</dbReference>
<dbReference type="CDD" id="cd00165">
    <property type="entry name" value="S4"/>
    <property type="match status" value="1"/>
</dbReference>
<dbReference type="FunFam" id="1.10.1050.10:FF:000001">
    <property type="entry name" value="30S ribosomal protein S4"/>
    <property type="match status" value="1"/>
</dbReference>
<dbReference type="FunFam" id="3.10.290.10:FF:000001">
    <property type="entry name" value="30S ribosomal protein S4"/>
    <property type="match status" value="1"/>
</dbReference>
<dbReference type="Gene3D" id="1.10.1050.10">
    <property type="entry name" value="Ribosomal Protein S4 Delta 41, Chain A, domain 1"/>
    <property type="match status" value="1"/>
</dbReference>
<dbReference type="Gene3D" id="3.10.290.10">
    <property type="entry name" value="RNA-binding S4 domain"/>
    <property type="match status" value="1"/>
</dbReference>
<dbReference type="HAMAP" id="MF_01306_B">
    <property type="entry name" value="Ribosomal_uS4_B"/>
    <property type="match status" value="1"/>
</dbReference>
<dbReference type="InterPro" id="IPR022801">
    <property type="entry name" value="Ribosomal_uS4"/>
</dbReference>
<dbReference type="InterPro" id="IPR005709">
    <property type="entry name" value="Ribosomal_uS4_bac-type"/>
</dbReference>
<dbReference type="InterPro" id="IPR018079">
    <property type="entry name" value="Ribosomal_uS4_CS"/>
</dbReference>
<dbReference type="InterPro" id="IPR001912">
    <property type="entry name" value="Ribosomal_uS4_N"/>
</dbReference>
<dbReference type="InterPro" id="IPR002942">
    <property type="entry name" value="S4_RNA-bd"/>
</dbReference>
<dbReference type="InterPro" id="IPR036986">
    <property type="entry name" value="S4_RNA-bd_sf"/>
</dbReference>
<dbReference type="NCBIfam" id="NF003717">
    <property type="entry name" value="PRK05327.1"/>
    <property type="match status" value="1"/>
</dbReference>
<dbReference type="NCBIfam" id="TIGR01017">
    <property type="entry name" value="rpsD_bact"/>
    <property type="match status" value="1"/>
</dbReference>
<dbReference type="PANTHER" id="PTHR11831">
    <property type="entry name" value="30S 40S RIBOSOMAL PROTEIN"/>
    <property type="match status" value="1"/>
</dbReference>
<dbReference type="PANTHER" id="PTHR11831:SF4">
    <property type="entry name" value="SMALL RIBOSOMAL SUBUNIT PROTEIN US4M"/>
    <property type="match status" value="1"/>
</dbReference>
<dbReference type="Pfam" id="PF00163">
    <property type="entry name" value="Ribosomal_S4"/>
    <property type="match status" value="1"/>
</dbReference>
<dbReference type="Pfam" id="PF01479">
    <property type="entry name" value="S4"/>
    <property type="match status" value="1"/>
</dbReference>
<dbReference type="SMART" id="SM01390">
    <property type="entry name" value="Ribosomal_S4"/>
    <property type="match status" value="1"/>
</dbReference>
<dbReference type="SMART" id="SM00363">
    <property type="entry name" value="S4"/>
    <property type="match status" value="1"/>
</dbReference>
<dbReference type="SUPFAM" id="SSF55174">
    <property type="entry name" value="Alpha-L RNA-binding motif"/>
    <property type="match status" value="1"/>
</dbReference>
<dbReference type="PROSITE" id="PS00632">
    <property type="entry name" value="RIBOSOMAL_S4"/>
    <property type="match status" value="1"/>
</dbReference>
<dbReference type="PROSITE" id="PS50889">
    <property type="entry name" value="S4"/>
    <property type="match status" value="1"/>
</dbReference>
<feature type="chain" id="PRO_1000140679" description="Small ribosomal subunit protein uS4">
    <location>
        <begin position="1"/>
        <end position="206"/>
    </location>
</feature>
<feature type="domain" description="S4 RNA-binding" evidence="1">
    <location>
        <begin position="96"/>
        <end position="156"/>
    </location>
</feature>
<organism>
    <name type="scientific">Alteromonas mediterranea (strain DSM 17117 / CIP 110805 / LMG 28347 / Deep ecotype)</name>
    <dbReference type="NCBI Taxonomy" id="1774373"/>
    <lineage>
        <taxon>Bacteria</taxon>
        <taxon>Pseudomonadati</taxon>
        <taxon>Pseudomonadota</taxon>
        <taxon>Gammaproteobacteria</taxon>
        <taxon>Alteromonadales</taxon>
        <taxon>Alteromonadaceae</taxon>
        <taxon>Alteromonas/Salinimonas group</taxon>
        <taxon>Alteromonas</taxon>
    </lineage>
</organism>
<proteinExistence type="inferred from homology"/>